<sequence>MAALNGLVLLLLTISAMFISECYSSGESQSIQRKGQCEEVTCHRTLNHLGVAVTSGCPSGCLCVISAPDSAVNVNGTCYQLMGSTSTTTSSTPSSEDQE</sequence>
<protein>
    <recommendedName>
        <fullName evidence="4">Complement inhibitor RaCI7</fullName>
    </recommendedName>
</protein>
<comment type="function">
    <text evidence="1 3">Complement inhibitor (PubMed:27018802). Prevents complement-mediated C5 activation by binding to C5 (By similarity). Binds C5 at a different binding site than the other tick complement inhibitors OmCI and CirpT1, and the drug eculizumab (By similarity).</text>
</comment>
<comment type="subcellular location">
    <subcellularLocation>
        <location evidence="6">Secreted</location>
    </subcellularLocation>
</comment>
<comment type="tissue specificity">
    <text evidence="6">Expressed in salivary glands.</text>
</comment>
<comment type="similarity">
    <text evidence="5">Belongs to the RaCI family.</text>
</comment>
<name>C5I7_DERAN</name>
<keyword id="KW-1216">Complement system impairing toxin</keyword>
<keyword id="KW-1015">Disulfide bond</keyword>
<keyword id="KW-0964">Secreted</keyword>
<keyword id="KW-0732">Signal</keyword>
<keyword id="KW-0800">Toxin</keyword>
<feature type="signal peptide" evidence="2">
    <location>
        <begin position="1"/>
        <end position="24"/>
    </location>
</feature>
<feature type="chain" id="PRO_5007523342" description="Complement inhibitor RaCI7">
    <location>
        <begin position="25"/>
        <end position="99"/>
    </location>
</feature>
<feature type="disulfide bond" evidence="1">
    <location>
        <begin position="37"/>
        <end position="61"/>
    </location>
</feature>
<feature type="disulfide bond" evidence="1">
    <location>
        <begin position="42"/>
        <end position="63"/>
    </location>
</feature>
<feature type="disulfide bond" evidence="1">
    <location>
        <begin position="57"/>
        <end position="78"/>
    </location>
</feature>
<dbReference type="EMBL" id="BK009408">
    <property type="protein sequence ID" value="DAA64997.1"/>
    <property type="molecule type" value="mRNA"/>
</dbReference>
<dbReference type="EMBL" id="EG363717">
    <property type="status" value="NOT_ANNOTATED_CDS"/>
    <property type="molecule type" value="mRNA"/>
</dbReference>
<dbReference type="SMR" id="A0A146B5A4"/>
<dbReference type="VEuPathDB" id="VectorBase:DAND_029292"/>
<dbReference type="GO" id="GO:0005576">
    <property type="term" value="C:extracellular region"/>
    <property type="evidence" value="ECO:0007669"/>
    <property type="project" value="UniProtKB-SubCell"/>
</dbReference>
<dbReference type="GO" id="GO:0090729">
    <property type="term" value="F:toxin activity"/>
    <property type="evidence" value="ECO:0007669"/>
    <property type="project" value="UniProtKB-KW"/>
</dbReference>
<dbReference type="CDD" id="cd22951">
    <property type="entry name" value="C5_RaCI-like"/>
    <property type="match status" value="1"/>
</dbReference>
<organism>
    <name type="scientific">Dermacentor andersoni</name>
    <name type="common">Rocky mountain wood tick</name>
    <dbReference type="NCBI Taxonomy" id="34620"/>
    <lineage>
        <taxon>Eukaryota</taxon>
        <taxon>Metazoa</taxon>
        <taxon>Ecdysozoa</taxon>
        <taxon>Arthropoda</taxon>
        <taxon>Chelicerata</taxon>
        <taxon>Arachnida</taxon>
        <taxon>Acari</taxon>
        <taxon>Parasitiformes</taxon>
        <taxon>Ixodida</taxon>
        <taxon>Ixodoidea</taxon>
        <taxon>Ixodidae</taxon>
        <taxon>Rhipicephalinae</taxon>
        <taxon>Dermacentor</taxon>
    </lineage>
</organism>
<evidence type="ECO:0000250" key="1">
    <source>
        <dbReference type="UniProtKB" id="A0A146B485"/>
    </source>
</evidence>
<evidence type="ECO:0000255" key="2"/>
<evidence type="ECO:0000269" key="3">
    <source>
    </source>
</evidence>
<evidence type="ECO:0000303" key="4">
    <source>
    </source>
</evidence>
<evidence type="ECO:0000305" key="5"/>
<evidence type="ECO:0000305" key="6">
    <source>
    </source>
</evidence>
<evidence type="ECO:0000312" key="7">
    <source>
        <dbReference type="EMBL" id="DAA64997.1"/>
    </source>
</evidence>
<proteinExistence type="inferred from homology"/>
<accession>A0A146B5A4</accession>
<reference evidence="7" key="1">
    <citation type="journal article" date="2016" name="Nat. Struct. Mol. Biol.">
        <title>Structural basis for therapeutic inhibition of complement C5.</title>
        <authorList>
            <person name="Jore M.M."/>
            <person name="Johnson S."/>
            <person name="Sheppard D."/>
            <person name="Barber N.M."/>
            <person name="Li Y.I."/>
            <person name="Nunn M.A."/>
            <person name="Elmlund H."/>
            <person name="Lea S.M."/>
        </authorList>
    </citation>
    <scope>NUCLEOTIDE SEQUENCE [MRNA]</scope>
    <scope>FUNCTION</scope>
    <source>
        <tissue>Salivary gland</tissue>
    </source>
</reference>